<accession>Q9XEK9</accession>
<sequence>FQSSGSPIKPRINLDRPSTSTPTPPEAPTSPSARQPVTQVPQANSVPAGAVASQAEVKKPADPQPPATPSAPVLRRPVRTAMPASPPRMVINLDDIPDRSKPVWPAPPPRAKGQGGGKGGKGGKGGKGGKGGKGDREQPAVVRRAKPRRTASTAEGPAAESKESGGREAQIWVTPKGGKGRDKWKKGKEEVDKSEALLLKARKKTRLERKERREEVREANAAKKEEIIEVGPQGMTVSEIAGKLAITPANVVTVLFKKGIMSAPSQTIAYDLVKIVCDEYKVEVLEVEEEDGIASMEDRFVLDEEAEALVSRPPVVTIMGHVDHGKTSLLDYIRKSNVVAGEASGITQAIGAYHVEFASPTDGTPTFISFIDTPGHEAFTAMRARGATVTDITIIVVAADDGVRPQTKEAIAHCKAAGVPMVVAINKIDKDGADPERVMNELAQAGLVPEEWGGEVPTVKISAKKGLGIKELLEMILLTAEVADLKANPAAPAEGTVIEAYLDRTRGPVATVLVQNGTLRAGDVVVTNATWGRVRAIMDEKGAMLEAAPPSLPVQVLGLDDVPAAGDKFEVYASEKEARDKVDEFERTKKEKNWASLASRDLVRLDNNADGKGLEVMNVILKTDVSGSCEAIRAALDTLPQTKIELRLILASPGDITVSDVNLAASTGSIILGFNVDTFSAAEALIKNLGIKCMTFDVIYDLVDQMKAVMEGKLGDEQIPEKAGEAEVKAVFAARNGKKAAGCLVVAGRLVAPAFIEVLRKKKILFSGQLFQLRRMKDNVSEVGTDTECGVTLDDFDDWQEGDRIVCYSTVTRQRALEATPA</sequence>
<gene>
    <name type="primary">INFB</name>
</gene>
<evidence type="ECO:0000250" key="1"/>
<evidence type="ECO:0000256" key="2">
    <source>
        <dbReference type="SAM" id="MobiDB-lite"/>
    </source>
</evidence>
<evidence type="ECO:0000305" key="3"/>
<organism>
    <name type="scientific">Euglena gracilis</name>
    <dbReference type="NCBI Taxonomy" id="3039"/>
    <lineage>
        <taxon>Eukaryota</taxon>
        <taxon>Discoba</taxon>
        <taxon>Euglenozoa</taxon>
        <taxon>Euglenida</taxon>
        <taxon>Spirocuta</taxon>
        <taxon>Euglenophyceae</taxon>
        <taxon>Euglenales</taxon>
        <taxon>Euglenaceae</taxon>
        <taxon>Euglena</taxon>
    </lineage>
</organism>
<proteinExistence type="evidence at transcript level"/>
<reference key="1">
    <citation type="submission" date="1998-11" db="EMBL/GenBank/DDBJ databases">
        <title>Characterization of a 'gamma' form of initiation factor 2 from Euglena gracilis chloroplast.</title>
        <authorList>
            <person name="Ward J.M."/>
            <person name="Ma L."/>
            <person name="Blanchard K."/>
            <person name="Spremulli L.L."/>
        </authorList>
    </citation>
    <scope>NUCLEOTIDE SEQUENCE [MRNA]</scope>
    <source>
        <strain>B</strain>
    </source>
</reference>
<comment type="function">
    <text evidence="1">One of the essential components for the initiation of protein synthesis. Protects formylmethionyl-tRNA from spontaneous hydrolysis and promotes its binding to the 30S ribosomal subunits. Also involved in the hydrolysis of GTP during the formation of the 70S ribosomal complex (By similarity).</text>
</comment>
<comment type="subcellular location">
    <subcellularLocation>
        <location>Plastid</location>
        <location>Chloroplast</location>
    </subcellularLocation>
</comment>
<comment type="similarity">
    <text evidence="3">Belongs to the TRAFAC class translation factor GTPase superfamily. Classic translation factor GTPase family. IF-2 subfamily.</text>
</comment>
<name>IF2C_EUGGR</name>
<protein>
    <recommendedName>
        <fullName>Translation initiation factor IF-2, chloroplastic</fullName>
    </recommendedName>
</protein>
<feature type="chain" id="PRO_0000137293" description="Translation initiation factor IF-2, chloroplastic">
    <location>
        <begin position="1" status="less than"/>
        <end position="822"/>
    </location>
</feature>
<feature type="domain" description="tr-type G">
    <location>
        <begin position="311"/>
        <end position="486"/>
    </location>
</feature>
<feature type="region of interest" description="Disordered" evidence="2">
    <location>
        <begin position="1"/>
        <end position="188"/>
    </location>
</feature>
<feature type="region of interest" description="G1" evidence="1">
    <location>
        <begin position="320"/>
        <end position="327"/>
    </location>
</feature>
<feature type="region of interest" description="G2" evidence="1">
    <location>
        <begin position="345"/>
        <end position="349"/>
    </location>
</feature>
<feature type="region of interest" description="G3" evidence="1">
    <location>
        <begin position="372"/>
        <end position="375"/>
    </location>
</feature>
<feature type="region of interest" description="G4" evidence="1">
    <location>
        <begin position="426"/>
        <end position="429"/>
    </location>
</feature>
<feature type="region of interest" description="G5" evidence="1">
    <location>
        <begin position="462"/>
        <end position="464"/>
    </location>
</feature>
<feature type="compositionally biased region" description="Polar residues" evidence="2">
    <location>
        <begin position="35"/>
        <end position="45"/>
    </location>
</feature>
<feature type="compositionally biased region" description="Gly residues" evidence="2">
    <location>
        <begin position="113"/>
        <end position="131"/>
    </location>
</feature>
<feature type="binding site" evidence="1">
    <location>
        <begin position="320"/>
        <end position="327"/>
    </location>
    <ligand>
        <name>GTP</name>
        <dbReference type="ChEBI" id="CHEBI:37565"/>
    </ligand>
</feature>
<feature type="binding site" evidence="1">
    <location>
        <begin position="372"/>
        <end position="376"/>
    </location>
    <ligand>
        <name>GTP</name>
        <dbReference type="ChEBI" id="CHEBI:37565"/>
    </ligand>
</feature>
<feature type="binding site" evidence="1">
    <location>
        <begin position="426"/>
        <end position="429"/>
    </location>
    <ligand>
        <name>GTP</name>
        <dbReference type="ChEBI" id="CHEBI:37565"/>
    </ligand>
</feature>
<feature type="non-terminal residue">
    <location>
        <position position="1"/>
    </location>
</feature>
<keyword id="KW-0150">Chloroplast</keyword>
<keyword id="KW-0342">GTP-binding</keyword>
<keyword id="KW-0396">Initiation factor</keyword>
<keyword id="KW-0547">Nucleotide-binding</keyword>
<keyword id="KW-0934">Plastid</keyword>
<keyword id="KW-0648">Protein biosynthesis</keyword>
<dbReference type="EMBL" id="AF109129">
    <property type="protein sequence ID" value="AAD20591.1"/>
    <property type="molecule type" value="mRNA"/>
</dbReference>
<dbReference type="SMR" id="Q9XEK9"/>
<dbReference type="GO" id="GO:0009507">
    <property type="term" value="C:chloroplast"/>
    <property type="evidence" value="ECO:0007669"/>
    <property type="project" value="UniProtKB-SubCell"/>
</dbReference>
<dbReference type="GO" id="GO:0005525">
    <property type="term" value="F:GTP binding"/>
    <property type="evidence" value="ECO:0007669"/>
    <property type="project" value="UniProtKB-KW"/>
</dbReference>
<dbReference type="GO" id="GO:0003924">
    <property type="term" value="F:GTPase activity"/>
    <property type="evidence" value="ECO:0007669"/>
    <property type="project" value="InterPro"/>
</dbReference>
<dbReference type="GO" id="GO:0003743">
    <property type="term" value="F:translation initiation factor activity"/>
    <property type="evidence" value="ECO:0007669"/>
    <property type="project" value="UniProtKB-KW"/>
</dbReference>
<dbReference type="CDD" id="cd01887">
    <property type="entry name" value="IF2_eIF5B"/>
    <property type="match status" value="1"/>
</dbReference>
<dbReference type="CDD" id="cd03702">
    <property type="entry name" value="IF2_mtIF2_II"/>
    <property type="match status" value="1"/>
</dbReference>
<dbReference type="CDD" id="cd03692">
    <property type="entry name" value="mtIF2_IVc"/>
    <property type="match status" value="1"/>
</dbReference>
<dbReference type="FunFam" id="2.40.30.10:FF:000007">
    <property type="entry name" value="Translation initiation factor IF-2"/>
    <property type="match status" value="1"/>
</dbReference>
<dbReference type="FunFam" id="2.40.30.10:FF:000008">
    <property type="entry name" value="Translation initiation factor IF-2"/>
    <property type="match status" value="1"/>
</dbReference>
<dbReference type="FunFam" id="3.40.50.10050:FF:000001">
    <property type="entry name" value="Translation initiation factor IF-2"/>
    <property type="match status" value="1"/>
</dbReference>
<dbReference type="FunFam" id="3.40.50.300:FF:000019">
    <property type="entry name" value="Translation initiation factor IF-2"/>
    <property type="match status" value="1"/>
</dbReference>
<dbReference type="Gene3D" id="3.40.50.300">
    <property type="entry name" value="P-loop containing nucleotide triphosphate hydrolases"/>
    <property type="match status" value="1"/>
</dbReference>
<dbReference type="Gene3D" id="2.40.30.10">
    <property type="entry name" value="Translation factors"/>
    <property type="match status" value="2"/>
</dbReference>
<dbReference type="Gene3D" id="3.40.50.10050">
    <property type="entry name" value="Translation initiation factor IF- 2, domain 3"/>
    <property type="match status" value="1"/>
</dbReference>
<dbReference type="HAMAP" id="MF_00100_B">
    <property type="entry name" value="IF_2_B"/>
    <property type="match status" value="1"/>
</dbReference>
<dbReference type="InterPro" id="IPR053905">
    <property type="entry name" value="EF-G-like_DII"/>
</dbReference>
<dbReference type="InterPro" id="IPR044145">
    <property type="entry name" value="IF2_II"/>
</dbReference>
<dbReference type="InterPro" id="IPR006847">
    <property type="entry name" value="IF2_N"/>
</dbReference>
<dbReference type="InterPro" id="IPR027417">
    <property type="entry name" value="P-loop_NTPase"/>
</dbReference>
<dbReference type="InterPro" id="IPR005225">
    <property type="entry name" value="Small_GTP-bd"/>
</dbReference>
<dbReference type="InterPro" id="IPR000795">
    <property type="entry name" value="T_Tr_GTP-bd_dom"/>
</dbReference>
<dbReference type="InterPro" id="IPR000178">
    <property type="entry name" value="TF_IF2_bacterial-like"/>
</dbReference>
<dbReference type="InterPro" id="IPR015760">
    <property type="entry name" value="TIF_IF2"/>
</dbReference>
<dbReference type="InterPro" id="IPR023115">
    <property type="entry name" value="TIF_IF2_dom3"/>
</dbReference>
<dbReference type="InterPro" id="IPR036925">
    <property type="entry name" value="TIF_IF2_dom3_sf"/>
</dbReference>
<dbReference type="InterPro" id="IPR009000">
    <property type="entry name" value="Transl_B-barrel_sf"/>
</dbReference>
<dbReference type="NCBIfam" id="TIGR00487">
    <property type="entry name" value="IF-2"/>
    <property type="match status" value="1"/>
</dbReference>
<dbReference type="NCBIfam" id="TIGR00231">
    <property type="entry name" value="small_GTP"/>
    <property type="match status" value="1"/>
</dbReference>
<dbReference type="PANTHER" id="PTHR43381:SF5">
    <property type="entry name" value="TR-TYPE G DOMAIN-CONTAINING PROTEIN"/>
    <property type="match status" value="1"/>
</dbReference>
<dbReference type="PANTHER" id="PTHR43381">
    <property type="entry name" value="TRANSLATION INITIATION FACTOR IF-2-RELATED"/>
    <property type="match status" value="1"/>
</dbReference>
<dbReference type="Pfam" id="PF22042">
    <property type="entry name" value="EF-G_D2"/>
    <property type="match status" value="1"/>
</dbReference>
<dbReference type="Pfam" id="PF00009">
    <property type="entry name" value="GTP_EFTU"/>
    <property type="match status" value="1"/>
</dbReference>
<dbReference type="Pfam" id="PF11987">
    <property type="entry name" value="IF-2"/>
    <property type="match status" value="1"/>
</dbReference>
<dbReference type="Pfam" id="PF04760">
    <property type="entry name" value="IF2_N"/>
    <property type="match status" value="1"/>
</dbReference>
<dbReference type="PRINTS" id="PR00315">
    <property type="entry name" value="ELONGATNFCT"/>
</dbReference>
<dbReference type="SUPFAM" id="SSF52156">
    <property type="entry name" value="Initiation factor IF2/eIF5b, domain 3"/>
    <property type="match status" value="1"/>
</dbReference>
<dbReference type="SUPFAM" id="SSF52540">
    <property type="entry name" value="P-loop containing nucleoside triphosphate hydrolases"/>
    <property type="match status" value="1"/>
</dbReference>
<dbReference type="SUPFAM" id="SSF50447">
    <property type="entry name" value="Translation proteins"/>
    <property type="match status" value="2"/>
</dbReference>
<dbReference type="PROSITE" id="PS51722">
    <property type="entry name" value="G_TR_2"/>
    <property type="match status" value="1"/>
</dbReference>
<dbReference type="PROSITE" id="PS01176">
    <property type="entry name" value="IF2"/>
    <property type="match status" value="1"/>
</dbReference>